<name>YL909_MIMIV</name>
<accession>Q5UQZ9</accession>
<organism>
    <name type="scientific">Acanthamoeba polyphaga mimivirus</name>
    <name type="common">APMV</name>
    <dbReference type="NCBI Taxonomy" id="212035"/>
    <lineage>
        <taxon>Viruses</taxon>
        <taxon>Varidnaviria</taxon>
        <taxon>Bamfordvirae</taxon>
        <taxon>Nucleocytoviricota</taxon>
        <taxon>Megaviricetes</taxon>
        <taxon>Imitervirales</taxon>
        <taxon>Mimiviridae</taxon>
        <taxon>Megamimivirinae</taxon>
        <taxon>Mimivirus</taxon>
        <taxon>Mimivirus bradfordmassiliense</taxon>
    </lineage>
</organism>
<feature type="chain" id="PRO_0000244781" description="Uncharacterized protein L909">
    <location>
        <begin position="1"/>
        <end position="431"/>
    </location>
</feature>
<sequence length="431" mass="50579">MNILLDQLFNFGVNNGDINVKSTMSDEIISAHKIILVNVSDYFKTQELFPSGKSSITELPFCIDVIKKCIHIFYSTNITEEITKNISIDNLIELFHLITFLCPNKKLTVEMLNVKSALLTGFIMNYLMTNDYCQIIDEDLRSKIRYLELYDIMNGPYNQNPDHELPNPQKDKNYCIVKYTDGYHNLTLGYKSIYMDYKYFQLGKTKGSIFDNKTLANMVLRSIIPNDEERVLFLRTISQWINPGRSEKYIILCTGNGYRVLEMLVKQIFEIEFSKEVKRIYWYNFKNKISKNKQKLFIKEKPIDLLTITGTGILSGIGATIDMCNEEIAKQKNKEYRNKMHNDVVANTKLYSDLIEFMKSQTFDGKNINHNILVEFDESKLNYVEKEINGSYIKINTVYNQFIDHQYKYTDIYFELSNLIMDYYVEQRISK</sequence>
<proteinExistence type="predicted"/>
<keyword id="KW-1185">Reference proteome</keyword>
<reference key="1">
    <citation type="journal article" date="2004" name="Science">
        <title>The 1.2-megabase genome sequence of Mimivirus.</title>
        <authorList>
            <person name="Raoult D."/>
            <person name="Audic S."/>
            <person name="Robert C."/>
            <person name="Abergel C."/>
            <person name="Renesto P."/>
            <person name="Ogata H."/>
            <person name="La Scola B."/>
            <person name="Susan M."/>
            <person name="Claverie J.-M."/>
        </authorList>
    </citation>
    <scope>NUCLEOTIDE SEQUENCE [LARGE SCALE GENOMIC DNA]</scope>
    <source>
        <strain>Rowbotham-Bradford</strain>
    </source>
</reference>
<gene>
    <name type="ordered locus">MIMI_L909</name>
</gene>
<protein>
    <recommendedName>
        <fullName>Uncharacterized protein L909</fullName>
    </recommendedName>
</protein>
<organismHost>
    <name type="scientific">Acanthamoeba polyphaga</name>
    <name type="common">Amoeba</name>
    <dbReference type="NCBI Taxonomy" id="5757"/>
</organismHost>
<dbReference type="EMBL" id="AY653733">
    <property type="protein sequence ID" value="AAV51166.1"/>
    <property type="molecule type" value="Genomic_DNA"/>
</dbReference>
<dbReference type="KEGG" id="vg:10021808"/>
<dbReference type="Proteomes" id="UP000001134">
    <property type="component" value="Genome"/>
</dbReference>
<dbReference type="CDD" id="cd18186">
    <property type="entry name" value="BTB_POZ_ZBTB_KLHL-like"/>
    <property type="match status" value="1"/>
</dbReference>
<dbReference type="Gene3D" id="3.30.710.10">
    <property type="entry name" value="Potassium Channel Kv1.1, Chain A"/>
    <property type="match status" value="1"/>
</dbReference>
<dbReference type="InterPro" id="IPR011333">
    <property type="entry name" value="SKP1/BTB/POZ_sf"/>
</dbReference>